<proteinExistence type="inferred from homology"/>
<reference key="1">
    <citation type="journal article" date="2002" name="Proc. Natl. Acad. Sci. U.S.A.">
        <title>Complete genome sequence of Clostridium perfringens, an anaerobic flesh-eater.</title>
        <authorList>
            <person name="Shimizu T."/>
            <person name="Ohtani K."/>
            <person name="Hirakawa H."/>
            <person name="Ohshima K."/>
            <person name="Yamashita A."/>
            <person name="Shiba T."/>
            <person name="Ogasawara N."/>
            <person name="Hattori M."/>
            <person name="Kuhara S."/>
            <person name="Hayashi H."/>
        </authorList>
    </citation>
    <scope>NUCLEOTIDE SEQUENCE [LARGE SCALE GENOMIC DNA]</scope>
    <source>
        <strain>13 / Type A</strain>
    </source>
</reference>
<protein>
    <recommendedName>
        <fullName evidence="1">L-fucose isomerase</fullName>
        <ecNumber evidence="1">5.3.1.25</ecNumber>
    </recommendedName>
    <alternativeName>
        <fullName evidence="1">6-deoxy-L-galactose isomerase</fullName>
    </alternativeName>
    <alternativeName>
        <fullName>FucIase</fullName>
    </alternativeName>
</protein>
<dbReference type="EC" id="5.3.1.25" evidence="1"/>
<dbReference type="EMBL" id="BA000016">
    <property type="protein sequence ID" value="BAB80024.1"/>
    <property type="molecule type" value="Genomic_DNA"/>
</dbReference>
<dbReference type="RefSeq" id="WP_011009734.1">
    <property type="nucleotide sequence ID" value="NC_003366.1"/>
</dbReference>
<dbReference type="SMR" id="Q8XNL5"/>
<dbReference type="STRING" id="195102.gene:10489574"/>
<dbReference type="KEGG" id="cpe:CPE0318"/>
<dbReference type="HOGENOM" id="CLU_033326_1_0_9"/>
<dbReference type="UniPathway" id="UPA00563">
    <property type="reaction ID" value="UER00624"/>
</dbReference>
<dbReference type="Proteomes" id="UP000000818">
    <property type="component" value="Chromosome"/>
</dbReference>
<dbReference type="GO" id="GO:0005737">
    <property type="term" value="C:cytoplasm"/>
    <property type="evidence" value="ECO:0007669"/>
    <property type="project" value="UniProtKB-SubCell"/>
</dbReference>
<dbReference type="GO" id="GO:0008790">
    <property type="term" value="F:arabinose isomerase activity"/>
    <property type="evidence" value="ECO:0007669"/>
    <property type="project" value="TreeGrafter"/>
</dbReference>
<dbReference type="GO" id="GO:0008736">
    <property type="term" value="F:L-fucose isomerase activity"/>
    <property type="evidence" value="ECO:0007669"/>
    <property type="project" value="UniProtKB-UniRule"/>
</dbReference>
<dbReference type="GO" id="GO:0030145">
    <property type="term" value="F:manganese ion binding"/>
    <property type="evidence" value="ECO:0007669"/>
    <property type="project" value="UniProtKB-UniRule"/>
</dbReference>
<dbReference type="GO" id="GO:0019571">
    <property type="term" value="P:D-arabinose catabolic process"/>
    <property type="evidence" value="ECO:0007669"/>
    <property type="project" value="TreeGrafter"/>
</dbReference>
<dbReference type="GO" id="GO:0042355">
    <property type="term" value="P:L-fucose catabolic process"/>
    <property type="evidence" value="ECO:0007669"/>
    <property type="project" value="UniProtKB-UniRule"/>
</dbReference>
<dbReference type="Gene3D" id="3.40.50.1070">
    <property type="match status" value="1"/>
</dbReference>
<dbReference type="Gene3D" id="3.40.275.10">
    <property type="entry name" value="L-fucose Isomerase, Chain A, domain 2"/>
    <property type="match status" value="1"/>
</dbReference>
<dbReference type="Gene3D" id="3.20.14.10">
    <property type="entry name" value="L-fucose/L-arabinose isomerase, C-terminal"/>
    <property type="match status" value="1"/>
</dbReference>
<dbReference type="HAMAP" id="MF_01254">
    <property type="entry name" value="Fucose_iso"/>
    <property type="match status" value="1"/>
</dbReference>
<dbReference type="InterPro" id="IPR004216">
    <property type="entry name" value="Fuc/Ara_isomerase_C"/>
</dbReference>
<dbReference type="InterPro" id="IPR038393">
    <property type="entry name" value="Fuc_iso_dom3_sf"/>
</dbReference>
<dbReference type="InterPro" id="IPR015888">
    <property type="entry name" value="Fuc_isomerase_C"/>
</dbReference>
<dbReference type="InterPro" id="IPR038391">
    <property type="entry name" value="Fucose_iso_dom1_sf"/>
</dbReference>
<dbReference type="InterPro" id="IPR012888">
    <property type="entry name" value="Fucose_iso_N1"/>
</dbReference>
<dbReference type="InterPro" id="IPR005763">
    <property type="entry name" value="Fucose_isomerase"/>
</dbReference>
<dbReference type="InterPro" id="IPR038392">
    <property type="entry name" value="Fucose_isomerase_dom2_sf"/>
</dbReference>
<dbReference type="InterPro" id="IPR009015">
    <property type="entry name" value="Fucose_isomerase_N/cen_sf"/>
</dbReference>
<dbReference type="InterPro" id="IPR012889">
    <property type="entry name" value="Fucose_isomerase_N2"/>
</dbReference>
<dbReference type="NCBIfam" id="TIGR01089">
    <property type="entry name" value="fucI"/>
    <property type="match status" value="1"/>
</dbReference>
<dbReference type="NCBIfam" id="NF008220">
    <property type="entry name" value="PRK10991.1"/>
    <property type="match status" value="1"/>
</dbReference>
<dbReference type="PANTHER" id="PTHR37840">
    <property type="entry name" value="L-FUCOSE ISOMERASE"/>
    <property type="match status" value="1"/>
</dbReference>
<dbReference type="PANTHER" id="PTHR37840:SF1">
    <property type="entry name" value="L-FUCOSE ISOMERASE"/>
    <property type="match status" value="1"/>
</dbReference>
<dbReference type="Pfam" id="PF02952">
    <property type="entry name" value="Fucose_iso_C"/>
    <property type="match status" value="1"/>
</dbReference>
<dbReference type="Pfam" id="PF07881">
    <property type="entry name" value="Fucose_iso_N1"/>
    <property type="match status" value="1"/>
</dbReference>
<dbReference type="Pfam" id="PF07882">
    <property type="entry name" value="Fucose_iso_N2"/>
    <property type="match status" value="1"/>
</dbReference>
<dbReference type="SUPFAM" id="SSF50443">
    <property type="entry name" value="FucI/AraA C-terminal domain-like"/>
    <property type="match status" value="1"/>
</dbReference>
<dbReference type="SUPFAM" id="SSF53743">
    <property type="entry name" value="FucI/AraA N-terminal and middle domains"/>
    <property type="match status" value="1"/>
</dbReference>
<comment type="function">
    <text evidence="1">Converts the aldose L-fucose into the corresponding ketose L-fuculose.</text>
</comment>
<comment type="catalytic activity">
    <reaction evidence="1">
        <text>L-fucose = L-fuculose</text>
        <dbReference type="Rhea" id="RHEA:17233"/>
        <dbReference type="ChEBI" id="CHEBI:2181"/>
        <dbReference type="ChEBI" id="CHEBI:17617"/>
        <dbReference type="EC" id="5.3.1.25"/>
    </reaction>
</comment>
<comment type="cofactor">
    <cofactor evidence="1">
        <name>Mn(2+)</name>
        <dbReference type="ChEBI" id="CHEBI:29035"/>
    </cofactor>
</comment>
<comment type="pathway">
    <text evidence="1">Carbohydrate degradation; L-fucose degradation; L-lactaldehyde and glycerone phosphate from L-fucose: step 1/3.</text>
</comment>
<comment type="subcellular location">
    <subcellularLocation>
        <location evidence="1">Cytoplasm</location>
    </subcellularLocation>
</comment>
<comment type="similarity">
    <text evidence="1">Belongs to the L-fucose isomerase family.</text>
</comment>
<organism>
    <name type="scientific">Clostridium perfringens (strain 13 / Type A)</name>
    <dbReference type="NCBI Taxonomy" id="195102"/>
    <lineage>
        <taxon>Bacteria</taxon>
        <taxon>Bacillati</taxon>
        <taxon>Bacillota</taxon>
        <taxon>Clostridia</taxon>
        <taxon>Eubacteriales</taxon>
        <taxon>Clostridiaceae</taxon>
        <taxon>Clostridium</taxon>
    </lineage>
</organism>
<name>FUCI_CLOPE</name>
<keyword id="KW-0119">Carbohydrate metabolism</keyword>
<keyword id="KW-0963">Cytoplasm</keyword>
<keyword id="KW-0294">Fucose metabolism</keyword>
<keyword id="KW-0413">Isomerase</keyword>
<keyword id="KW-0464">Manganese</keyword>
<keyword id="KW-0479">Metal-binding</keyword>
<keyword id="KW-1185">Reference proteome</keyword>
<accession>Q8XNL5</accession>
<gene>
    <name evidence="1" type="primary">fucI</name>
    <name type="ordered locus">CPE0318</name>
</gene>
<sequence length="595" mass="65929">MKTYPKIGIRPTIDGRQGGVRESLEEKAMKMAQAAKKLIENSLYYADGTPVQCVLASRTIGGSGDAGIVQQEFTGKNIVATLSVTPSWCYGTETMDLDPNTIKAIWGFNGTERPGAVYLAAAMSGYAQKGIPAFKIYGHDVQELDDDTIPVDVQEKILSFARGAIAVGQMKGKSYVNIGASSMGIAGSQVDISFFEDYLGMLVEFVDMTEILRRIHLEIFDPIEYDKALNWIKENCREGIDINEGKDLPDIVKKSKVIPADKDWEFIAKQAIIIRDILYRNEKLGDLGWEEEARGRNAIAGGFQGQRQWTDWLPNGDFTEAIMASTFDWNGPRQVTAFATENDTLNGVSMLLGTLLTNKAPIFSDVRTYWSPESVKRVTGKELTGKAKNGIIHLINSGASALDGTAAAKDKDGNKTMKEFWNMTNEDVQSCLKATDWCRANYEYFRGGGFSSHFKTEAELPVTLIRVNLIKGIGPTLQIAEGYTCVIDEDIHQILDERTDKTWPTTWFAPNLGECGFETVYDVMNHWGANHGAFVHGHIGSDLITLASMLRIPVTLHNVPRERIFRPNIFEGAGTKALETADFEICRLLGPLYKK</sequence>
<feature type="chain" id="PRO_0000204144" description="L-fucose isomerase">
    <location>
        <begin position="1"/>
        <end position="595"/>
    </location>
</feature>
<feature type="active site" description="Proton acceptor" evidence="1">
    <location>
        <position position="341"/>
    </location>
</feature>
<feature type="active site" description="Proton acceptor" evidence="1">
    <location>
        <position position="365"/>
    </location>
</feature>
<feature type="binding site" evidence="1">
    <location>
        <position position="341"/>
    </location>
    <ligand>
        <name>Mn(2+)</name>
        <dbReference type="ChEBI" id="CHEBI:29035"/>
    </ligand>
</feature>
<feature type="binding site" evidence="1">
    <location>
        <position position="365"/>
    </location>
    <ligand>
        <name>Mn(2+)</name>
        <dbReference type="ChEBI" id="CHEBI:29035"/>
    </ligand>
</feature>
<feature type="binding site" evidence="1">
    <location>
        <position position="531"/>
    </location>
    <ligand>
        <name>Mn(2+)</name>
        <dbReference type="ChEBI" id="CHEBI:29035"/>
    </ligand>
</feature>
<evidence type="ECO:0000255" key="1">
    <source>
        <dbReference type="HAMAP-Rule" id="MF_01254"/>
    </source>
</evidence>